<feature type="propeptide" id="PRO_0000000632" description="Removed in mature form" evidence="1">
    <location>
        <begin position="1"/>
        <end position="2"/>
    </location>
</feature>
<feature type="chain" id="PRO_0000000633" description="Actin, muscle-type A1">
    <location>
        <begin position="3"/>
        <end position="376"/>
    </location>
</feature>
<feature type="modified residue" description="N-acetylaspartate" evidence="1">
    <location>
        <position position="3"/>
    </location>
</feature>
<feature type="modified residue" description="Methionine sulfoxide" evidence="1">
    <location>
        <position position="45"/>
    </location>
</feature>
<feature type="modified residue" description="Methionine sulfoxide" evidence="1">
    <location>
        <position position="48"/>
    </location>
</feature>
<keyword id="KW-0007">Acetylation</keyword>
<keyword id="KW-0067">ATP-binding</keyword>
<keyword id="KW-0963">Cytoplasm</keyword>
<keyword id="KW-0206">Cytoskeleton</keyword>
<keyword id="KW-0378">Hydrolase</keyword>
<keyword id="KW-0547">Nucleotide-binding</keyword>
<keyword id="KW-0558">Oxidation</keyword>
<keyword id="KW-1185">Reference proteome</keyword>
<dbReference type="EC" id="3.6.4.-" evidence="2"/>
<dbReference type="EMBL" id="X05185">
    <property type="protein sequence ID" value="CAA28818.1"/>
    <property type="molecule type" value="Genomic_DNA"/>
</dbReference>
<dbReference type="PIR" id="S09059">
    <property type="entry name" value="S09059"/>
</dbReference>
<dbReference type="RefSeq" id="NP_001119724.1">
    <property type="nucleotide sequence ID" value="NM_001126252.1"/>
</dbReference>
<dbReference type="SMR" id="P07836"/>
<dbReference type="FunCoup" id="P07836">
    <property type="interactions" value="25"/>
</dbReference>
<dbReference type="STRING" id="7091.P07836"/>
<dbReference type="PaxDb" id="7091-BGIBMGA013945-TA"/>
<dbReference type="EnsemblMetazoa" id="NM_001126252.1">
    <property type="protein sequence ID" value="NP_001119724.1"/>
    <property type="gene ID" value="GeneID_100145913"/>
</dbReference>
<dbReference type="GeneID" id="100145913"/>
<dbReference type="KEGG" id="bmor:100145913"/>
<dbReference type="CTD" id="100145913"/>
<dbReference type="eggNOG" id="KOG0676">
    <property type="taxonomic scope" value="Eukaryota"/>
</dbReference>
<dbReference type="HOGENOM" id="CLU_027965_0_2_1"/>
<dbReference type="InParanoid" id="P07836"/>
<dbReference type="OrthoDB" id="129748at7088"/>
<dbReference type="Proteomes" id="UP000005204">
    <property type="component" value="Unassembled WGS sequence"/>
</dbReference>
<dbReference type="GO" id="GO:0005737">
    <property type="term" value="C:cytoplasm"/>
    <property type="evidence" value="ECO:0007669"/>
    <property type="project" value="UniProtKB-KW"/>
</dbReference>
<dbReference type="GO" id="GO:0005856">
    <property type="term" value="C:cytoskeleton"/>
    <property type="evidence" value="ECO:0007669"/>
    <property type="project" value="UniProtKB-SubCell"/>
</dbReference>
<dbReference type="GO" id="GO:0005524">
    <property type="term" value="F:ATP binding"/>
    <property type="evidence" value="ECO:0007669"/>
    <property type="project" value="UniProtKB-KW"/>
</dbReference>
<dbReference type="GO" id="GO:0016787">
    <property type="term" value="F:hydrolase activity"/>
    <property type="evidence" value="ECO:0007669"/>
    <property type="project" value="UniProtKB-KW"/>
</dbReference>
<dbReference type="CDD" id="cd10224">
    <property type="entry name" value="ASKHA_NBD_actin"/>
    <property type="match status" value="1"/>
</dbReference>
<dbReference type="FunFam" id="3.30.420.40:FF:000131">
    <property type="entry name" value="Actin, alpha skeletal muscle"/>
    <property type="match status" value="1"/>
</dbReference>
<dbReference type="FunFam" id="3.30.420.40:FF:000291">
    <property type="entry name" value="Actin, alpha skeletal muscle"/>
    <property type="match status" value="1"/>
</dbReference>
<dbReference type="FunFam" id="3.90.640.10:FF:000047">
    <property type="entry name" value="Actin, alpha skeletal muscle"/>
    <property type="match status" value="1"/>
</dbReference>
<dbReference type="FunFam" id="3.30.420.40:FF:000058">
    <property type="entry name" value="Putative actin-related protein 5"/>
    <property type="match status" value="1"/>
</dbReference>
<dbReference type="Gene3D" id="3.30.420.40">
    <property type="match status" value="2"/>
</dbReference>
<dbReference type="Gene3D" id="3.90.640.10">
    <property type="entry name" value="Actin, Chain A, domain 4"/>
    <property type="match status" value="1"/>
</dbReference>
<dbReference type="InterPro" id="IPR004000">
    <property type="entry name" value="Actin"/>
</dbReference>
<dbReference type="InterPro" id="IPR020902">
    <property type="entry name" value="Actin/actin-like_CS"/>
</dbReference>
<dbReference type="InterPro" id="IPR004001">
    <property type="entry name" value="Actin_CS"/>
</dbReference>
<dbReference type="InterPro" id="IPR043129">
    <property type="entry name" value="ATPase_NBD"/>
</dbReference>
<dbReference type="PANTHER" id="PTHR11937">
    <property type="entry name" value="ACTIN"/>
    <property type="match status" value="1"/>
</dbReference>
<dbReference type="Pfam" id="PF00022">
    <property type="entry name" value="Actin"/>
    <property type="match status" value="1"/>
</dbReference>
<dbReference type="PRINTS" id="PR00190">
    <property type="entry name" value="ACTIN"/>
</dbReference>
<dbReference type="SMART" id="SM00268">
    <property type="entry name" value="ACTIN"/>
    <property type="match status" value="1"/>
</dbReference>
<dbReference type="SUPFAM" id="SSF53067">
    <property type="entry name" value="Actin-like ATPase domain"/>
    <property type="match status" value="2"/>
</dbReference>
<dbReference type="PROSITE" id="PS00406">
    <property type="entry name" value="ACTINS_1"/>
    <property type="match status" value="1"/>
</dbReference>
<dbReference type="PROSITE" id="PS00432">
    <property type="entry name" value="ACTINS_2"/>
    <property type="match status" value="1"/>
</dbReference>
<dbReference type="PROSITE" id="PS01132">
    <property type="entry name" value="ACTINS_ACT_LIKE"/>
    <property type="match status" value="1"/>
</dbReference>
<sequence>MCDDDVRALVVDNGSGMCKAGFAGDDAPRAVFPSIVGRPRHQGLMVGMGQKDSYVGDEAQSKRGILTLKYPIEHGIITNWDDMEKIWHHTFYNELRVAPEEHPVLLTEAPLNPKANREKMTQIMFETFNSPAMYVAIQAVLSLYASGRTTGIVLDSGDGVSHTVPIYEGYALPHAILRLDLAGRDLTDYLMKILTERGYSFTTTAEREIVRDIKEKLCYVALDFEQEMATAAASTSLEKSYELPDGQVITIGNERFRCPEALFQPSFLGMESCGIHETVYNSIMKCDVDIRKDLYANTVMSGGTTMYPGIADRMQKEITALAPSTIKIKIIAPPERKYSVWIGGSILASLSTFQQMWISKEEYDESGPGIVHRKCF</sequence>
<evidence type="ECO:0000250" key="1"/>
<evidence type="ECO:0000250" key="2">
    <source>
        <dbReference type="UniProtKB" id="P68137"/>
    </source>
</evidence>
<evidence type="ECO:0000305" key="3"/>
<protein>
    <recommendedName>
        <fullName>Actin, muscle-type A1</fullName>
        <ecNumber evidence="2">3.6.4.-</ecNumber>
    </recommendedName>
</protein>
<comment type="function">
    <text>Actins are highly conserved proteins that are involved in various types of cell motility and are ubiquitously expressed in all eukaryotic cells.</text>
</comment>
<comment type="function">
    <text>Multiple isoforms are involved in various cellular functions such as cytoskeleton structure, cell mobility, chromosome movement and muscle contraction.</text>
</comment>
<comment type="catalytic activity">
    <reaction evidence="2">
        <text>ATP + H2O = ADP + phosphate + H(+)</text>
        <dbReference type="Rhea" id="RHEA:13065"/>
        <dbReference type="ChEBI" id="CHEBI:15377"/>
        <dbReference type="ChEBI" id="CHEBI:15378"/>
        <dbReference type="ChEBI" id="CHEBI:30616"/>
        <dbReference type="ChEBI" id="CHEBI:43474"/>
        <dbReference type="ChEBI" id="CHEBI:456216"/>
    </reaction>
</comment>
<comment type="subunit">
    <text>Polymerization of globular actin (G-actin) leads to a structural filament (F-actin) in the form of a two-stranded helix. Each actin can bind to 4 others.</text>
</comment>
<comment type="subcellular location">
    <subcellularLocation>
        <location>Cytoplasm</location>
        <location>Cytoskeleton</location>
    </subcellularLocation>
</comment>
<comment type="PTM">
    <text evidence="1">Oxidation of Met-45 to form methionine sulfoxide promotes actin filament depolymerization. Methionine sulfoxide is produced stereospecifically, but it is not known whether the (S)-S-oxide or the (R)-S-oxide is produced (By similarity).</text>
</comment>
<comment type="miscellaneous">
    <text>There are at least 5 different actin genes in this organism.</text>
</comment>
<comment type="similarity">
    <text evidence="3">Belongs to the actin family.</text>
</comment>
<reference key="1">
    <citation type="journal article" date="1987" name="Nucleic Acids Res.">
        <title>Nucleotide sequence of the coding region of two actin genes in Bombyx mori.</title>
        <authorList>
            <person name="Mounier N."/>
            <person name="Gaillard J."/>
            <person name="Prudhomme J.-C."/>
        </authorList>
    </citation>
    <scope>NUCLEOTIDE SEQUENCE [GENOMIC DNA]</scope>
    <source>
        <strain>703</strain>
    </source>
</reference>
<proteinExistence type="inferred from homology"/>
<accession>P07836</accession>
<organism>
    <name type="scientific">Bombyx mori</name>
    <name type="common">Silk moth</name>
    <dbReference type="NCBI Taxonomy" id="7091"/>
    <lineage>
        <taxon>Eukaryota</taxon>
        <taxon>Metazoa</taxon>
        <taxon>Ecdysozoa</taxon>
        <taxon>Arthropoda</taxon>
        <taxon>Hexapoda</taxon>
        <taxon>Insecta</taxon>
        <taxon>Pterygota</taxon>
        <taxon>Neoptera</taxon>
        <taxon>Endopterygota</taxon>
        <taxon>Lepidoptera</taxon>
        <taxon>Glossata</taxon>
        <taxon>Ditrysia</taxon>
        <taxon>Bombycoidea</taxon>
        <taxon>Bombycidae</taxon>
        <taxon>Bombycinae</taxon>
        <taxon>Bombyx</taxon>
    </lineage>
</organism>
<name>ACT1_BOMMO</name>